<protein>
    <recommendedName>
        <fullName>Thermosome subunit gamma</fullName>
    </recommendedName>
    <alternativeName>
        <fullName>Chaperonin subunit gamma</fullName>
    </alternativeName>
    <alternativeName>
        <fullName>Thermosome subunit 3</fullName>
    </alternativeName>
</protein>
<dbReference type="EMBL" id="AF149921">
    <property type="protein sequence ID" value="AAF03362.1"/>
    <property type="molecule type" value="Genomic_DNA"/>
</dbReference>
<dbReference type="EMBL" id="AE006641">
    <property type="protein sequence ID" value="AAK43104.1"/>
    <property type="status" value="ALT_INIT"/>
    <property type="molecule type" value="Genomic_DNA"/>
</dbReference>
<dbReference type="PIR" id="A99481">
    <property type="entry name" value="A99481"/>
</dbReference>
<dbReference type="SMR" id="Q9V2T7"/>
<dbReference type="DIP" id="DIP-61908N"/>
<dbReference type="FunCoup" id="Q9V2T7">
    <property type="interactions" value="269"/>
</dbReference>
<dbReference type="IntAct" id="Q9V2T7">
    <property type="interactions" value="1"/>
</dbReference>
<dbReference type="STRING" id="273057.SSO3000"/>
<dbReference type="PaxDb" id="273057-SSO3000"/>
<dbReference type="EnsemblBacteria" id="AAK43104">
    <property type="protein sequence ID" value="AAK43104"/>
    <property type="gene ID" value="SSO3000"/>
</dbReference>
<dbReference type="KEGG" id="sso:SSO3000"/>
<dbReference type="PATRIC" id="fig|273057.12.peg.3093"/>
<dbReference type="eggNOG" id="arCOG01257">
    <property type="taxonomic scope" value="Archaea"/>
</dbReference>
<dbReference type="HOGENOM" id="CLU_008891_9_1_2"/>
<dbReference type="InParanoid" id="Q9V2T7"/>
<dbReference type="PhylomeDB" id="Q9V2T7"/>
<dbReference type="Proteomes" id="UP000001974">
    <property type="component" value="Chromosome"/>
</dbReference>
<dbReference type="GO" id="GO:0005524">
    <property type="term" value="F:ATP binding"/>
    <property type="evidence" value="ECO:0007669"/>
    <property type="project" value="UniProtKB-KW"/>
</dbReference>
<dbReference type="GO" id="GO:0016887">
    <property type="term" value="F:ATP hydrolysis activity"/>
    <property type="evidence" value="ECO:0007669"/>
    <property type="project" value="InterPro"/>
</dbReference>
<dbReference type="GO" id="GO:0140662">
    <property type="term" value="F:ATP-dependent protein folding chaperone"/>
    <property type="evidence" value="ECO:0007669"/>
    <property type="project" value="InterPro"/>
</dbReference>
<dbReference type="GO" id="GO:0051082">
    <property type="term" value="F:unfolded protein binding"/>
    <property type="evidence" value="ECO:0000318"/>
    <property type="project" value="GO_Central"/>
</dbReference>
<dbReference type="GO" id="GO:0006457">
    <property type="term" value="P:protein folding"/>
    <property type="evidence" value="ECO:0000318"/>
    <property type="project" value="GO_Central"/>
</dbReference>
<dbReference type="CDD" id="cd03343">
    <property type="entry name" value="cpn60"/>
    <property type="match status" value="1"/>
</dbReference>
<dbReference type="Gene3D" id="3.50.7.10">
    <property type="entry name" value="GroEL"/>
    <property type="match status" value="1"/>
</dbReference>
<dbReference type="Gene3D" id="1.10.560.10">
    <property type="entry name" value="GroEL-like equatorial domain"/>
    <property type="match status" value="1"/>
</dbReference>
<dbReference type="Gene3D" id="3.30.260.10">
    <property type="entry name" value="TCP-1-like chaperonin intermediate domain"/>
    <property type="match status" value="1"/>
</dbReference>
<dbReference type="InterPro" id="IPR017998">
    <property type="entry name" value="Chaperone_TCP-1"/>
</dbReference>
<dbReference type="InterPro" id="IPR002194">
    <property type="entry name" value="Chaperonin_TCP-1_CS"/>
</dbReference>
<dbReference type="InterPro" id="IPR002423">
    <property type="entry name" value="Cpn60/GroEL/TCP-1"/>
</dbReference>
<dbReference type="InterPro" id="IPR027409">
    <property type="entry name" value="GroEL-like_apical_dom_sf"/>
</dbReference>
<dbReference type="InterPro" id="IPR027413">
    <property type="entry name" value="GROEL-like_equatorial_sf"/>
</dbReference>
<dbReference type="InterPro" id="IPR027410">
    <property type="entry name" value="TCP-1-like_intermed_sf"/>
</dbReference>
<dbReference type="InterPro" id="IPR053374">
    <property type="entry name" value="TCP-1_chaperonin"/>
</dbReference>
<dbReference type="InterPro" id="IPR054827">
    <property type="entry name" value="thermosome_alpha"/>
</dbReference>
<dbReference type="InterPro" id="IPR012714">
    <property type="entry name" value="Thermosome_arc"/>
</dbReference>
<dbReference type="NCBIfam" id="NF041082">
    <property type="entry name" value="thermosome_alpha"/>
    <property type="match status" value="1"/>
</dbReference>
<dbReference type="NCBIfam" id="TIGR02339">
    <property type="entry name" value="thermosome_arch"/>
    <property type="match status" value="1"/>
</dbReference>
<dbReference type="NCBIfam" id="NF041083">
    <property type="entry name" value="thermosome_beta"/>
    <property type="match status" value="1"/>
</dbReference>
<dbReference type="PANTHER" id="PTHR11353">
    <property type="entry name" value="CHAPERONIN"/>
    <property type="match status" value="1"/>
</dbReference>
<dbReference type="Pfam" id="PF00118">
    <property type="entry name" value="Cpn60_TCP1"/>
    <property type="match status" value="1"/>
</dbReference>
<dbReference type="PRINTS" id="PR00304">
    <property type="entry name" value="TCOMPLEXTCP1"/>
</dbReference>
<dbReference type="SUPFAM" id="SSF52029">
    <property type="entry name" value="GroEL apical domain-like"/>
    <property type="match status" value="1"/>
</dbReference>
<dbReference type="SUPFAM" id="SSF48592">
    <property type="entry name" value="GroEL equatorial domain-like"/>
    <property type="match status" value="1"/>
</dbReference>
<dbReference type="SUPFAM" id="SSF54849">
    <property type="entry name" value="GroEL-intermediate domain like"/>
    <property type="match status" value="1"/>
</dbReference>
<dbReference type="PROSITE" id="PS00750">
    <property type="entry name" value="TCP1_1"/>
    <property type="match status" value="1"/>
</dbReference>
<dbReference type="PROSITE" id="PS00751">
    <property type="entry name" value="TCP1_2"/>
    <property type="match status" value="1"/>
</dbReference>
<name>THSG_SACS2</name>
<evidence type="ECO:0000250" key="1"/>
<evidence type="ECO:0000305" key="2"/>
<gene>
    <name type="primary">thsC</name>
    <name type="synonym">thsG</name>
    <name type="ordered locus">SSO3000</name>
</gene>
<feature type="chain" id="PRO_0000128403" description="Thermosome subunit gamma">
    <location>
        <begin position="1"/>
        <end position="535"/>
    </location>
</feature>
<accession>Q9V2T7</accession>
<keyword id="KW-0067">ATP-binding</keyword>
<keyword id="KW-0143">Chaperone</keyword>
<keyword id="KW-0547">Nucleotide-binding</keyword>
<keyword id="KW-1185">Reference proteome</keyword>
<comment type="function">
    <text evidence="1">Molecular chaperone; binds unfolded polypeptides in vitro, and has a weak ATPase activity.</text>
</comment>
<comment type="subunit">
    <text evidence="1">Forms a Heterooligomeric complex of two stacked eight-membered rings.</text>
</comment>
<comment type="similarity">
    <text evidence="2">Belongs to the TCP-1 chaperonin family.</text>
</comment>
<comment type="sequence caution" evidence="2">
    <conflict type="erroneous initiation">
        <sequence resource="EMBL-CDS" id="AAK43104"/>
    </conflict>
</comment>
<organism>
    <name type="scientific">Saccharolobus solfataricus (strain ATCC 35092 / DSM 1617 / JCM 11322 / P2)</name>
    <name type="common">Sulfolobus solfataricus</name>
    <dbReference type="NCBI Taxonomy" id="273057"/>
    <lineage>
        <taxon>Archaea</taxon>
        <taxon>Thermoproteota</taxon>
        <taxon>Thermoprotei</taxon>
        <taxon>Sulfolobales</taxon>
        <taxon>Sulfolobaceae</taxon>
        <taxon>Saccharolobus</taxon>
    </lineage>
</organism>
<reference key="1">
    <citation type="journal article" date="1999" name="Curr. Biol.">
        <title>Recurrent paralogy in the evolution of archaeal chaperonins.</title>
        <authorList>
            <person name="Archibald J.M."/>
            <person name="Logsdon J.M. Jr."/>
            <person name="Doolittle W.F."/>
        </authorList>
    </citation>
    <scope>NUCLEOTIDE SEQUENCE [GENOMIC DNA]</scope>
    <source>
        <strain>ATCC 35092 / DSM 1617 / JCM 11322 / P2</strain>
    </source>
</reference>
<reference key="2">
    <citation type="journal article" date="2001" name="Proc. Natl. Acad. Sci. U.S.A.">
        <title>The complete genome of the crenarchaeon Sulfolobus solfataricus P2.</title>
        <authorList>
            <person name="She Q."/>
            <person name="Singh R.K."/>
            <person name="Confalonieri F."/>
            <person name="Zivanovic Y."/>
            <person name="Allard G."/>
            <person name="Awayez M.J."/>
            <person name="Chan-Weiher C.C.-Y."/>
            <person name="Clausen I.G."/>
            <person name="Curtis B.A."/>
            <person name="De Moors A."/>
            <person name="Erauso G."/>
            <person name="Fletcher C."/>
            <person name="Gordon P.M.K."/>
            <person name="Heikamp-de Jong I."/>
            <person name="Jeffries A.C."/>
            <person name="Kozera C.J."/>
            <person name="Medina N."/>
            <person name="Peng X."/>
            <person name="Thi-Ngoc H.P."/>
            <person name="Redder P."/>
            <person name="Schenk M.E."/>
            <person name="Theriault C."/>
            <person name="Tolstrup N."/>
            <person name="Charlebois R.L."/>
            <person name="Doolittle W.F."/>
            <person name="Duguet M."/>
            <person name="Gaasterland T."/>
            <person name="Garrett R.A."/>
            <person name="Ragan M.A."/>
            <person name="Sensen C.W."/>
            <person name="Van der Oost J."/>
        </authorList>
    </citation>
    <scope>NUCLEOTIDE SEQUENCE [LARGE SCALE GENOMIC DNA]</scope>
    <source>
        <strain>ATCC 35092 / DSM 1617 / JCM 11322 / P2</strain>
    </source>
</reference>
<sequence>MAYLLREGTQRSTGNEVILNNIAVAKILLEMLKSSLGPKGLDKMLVEGQDVTITNDGATIVKNMEVQHPTAKLLIETAKTVDTEVGDGTTSVVVLAGLLLEKAEDLLNQKIHPTVIIEGYRKALNSSLELLKNIADKISPEDRKIVHDLVYTTLSSKFFSTEHTLEKIINLVIDASLAVLDKRDGSYDLDIKNIKIVKVNGGEFDDSELINGIVVDKEPTNENMPKRVENVKVMLADFPLKLEKTEISMKLGISDPTQIKGYLDEQTAYVKQMVDKIKAMGVKLFITQKDIDEIASYLMGKNGIMALKNVKRSDIELLSRATGAKIASSMKDANESDLGEAKLVEVRNLGKNKYLFIQSDKAKAVTVIIKGSNNMITDEAERSLNDAFNSIRNLLLEPYIVAGGGAVEEELAKRLRDDARKVIGKEQLAFNAFADALEEYVSILSETAGMDPISALTEIRHKHATGLKNAGIDVTKARIYDNMLELRVIDSLKVKEQVLKSATEAATAILKIDDMIAAAPAKQQPQPQQPNPYLG</sequence>
<proteinExistence type="inferred from homology"/>